<comment type="function">
    <text evidence="1">Specifically methylates the adenine in position 37 of tRNA(1)(Val) (anticodon cmo5UAC).</text>
</comment>
<comment type="catalytic activity">
    <reaction evidence="1">
        <text>adenosine(37) in tRNA1(Val) + S-adenosyl-L-methionine = N(6)-methyladenosine(37) in tRNA1(Val) + S-adenosyl-L-homocysteine + H(+)</text>
        <dbReference type="Rhea" id="RHEA:43160"/>
        <dbReference type="Rhea" id="RHEA-COMP:10369"/>
        <dbReference type="Rhea" id="RHEA-COMP:10370"/>
        <dbReference type="ChEBI" id="CHEBI:15378"/>
        <dbReference type="ChEBI" id="CHEBI:57856"/>
        <dbReference type="ChEBI" id="CHEBI:59789"/>
        <dbReference type="ChEBI" id="CHEBI:74411"/>
        <dbReference type="ChEBI" id="CHEBI:74449"/>
        <dbReference type="EC" id="2.1.1.223"/>
    </reaction>
</comment>
<comment type="subcellular location">
    <subcellularLocation>
        <location evidence="1">Cytoplasm</location>
    </subcellularLocation>
</comment>
<comment type="similarity">
    <text evidence="1">Belongs to the methyltransferase superfamily. tRNA (adenine-N(6)-)-methyltransferase family.</text>
</comment>
<gene>
    <name type="ordered locus">Sputcn32_0888</name>
</gene>
<evidence type="ECO:0000255" key="1">
    <source>
        <dbReference type="HAMAP-Rule" id="MF_01872"/>
    </source>
</evidence>
<accession>A4Y3T4</accession>
<name>TRMN6_SHEPC</name>
<protein>
    <recommendedName>
        <fullName evidence="1">tRNA1(Val) (adenine(37)-N6)-methyltransferase</fullName>
        <ecNumber evidence="1">2.1.1.223</ecNumber>
    </recommendedName>
    <alternativeName>
        <fullName evidence="1">tRNA m6A37 methyltransferase</fullName>
    </alternativeName>
</protein>
<organism>
    <name type="scientific">Shewanella putrefaciens (strain CN-32 / ATCC BAA-453)</name>
    <dbReference type="NCBI Taxonomy" id="319224"/>
    <lineage>
        <taxon>Bacteria</taxon>
        <taxon>Pseudomonadati</taxon>
        <taxon>Pseudomonadota</taxon>
        <taxon>Gammaproteobacteria</taxon>
        <taxon>Alteromonadales</taxon>
        <taxon>Shewanellaceae</taxon>
        <taxon>Shewanella</taxon>
    </lineage>
</organism>
<proteinExistence type="inferred from homology"/>
<reference key="1">
    <citation type="submission" date="2007-04" db="EMBL/GenBank/DDBJ databases">
        <title>Complete sequence of Shewanella putrefaciens CN-32.</title>
        <authorList>
            <consortium name="US DOE Joint Genome Institute"/>
            <person name="Copeland A."/>
            <person name="Lucas S."/>
            <person name="Lapidus A."/>
            <person name="Barry K."/>
            <person name="Detter J.C."/>
            <person name="Glavina del Rio T."/>
            <person name="Hammon N."/>
            <person name="Israni S."/>
            <person name="Dalin E."/>
            <person name="Tice H."/>
            <person name="Pitluck S."/>
            <person name="Chain P."/>
            <person name="Malfatti S."/>
            <person name="Shin M."/>
            <person name="Vergez L."/>
            <person name="Schmutz J."/>
            <person name="Larimer F."/>
            <person name="Land M."/>
            <person name="Hauser L."/>
            <person name="Kyrpides N."/>
            <person name="Mikhailova N."/>
            <person name="Romine M.F."/>
            <person name="Fredrickson J."/>
            <person name="Tiedje J."/>
            <person name="Richardson P."/>
        </authorList>
    </citation>
    <scope>NUCLEOTIDE SEQUENCE [LARGE SCALE GENOMIC DNA]</scope>
    <source>
        <strain>CN-32 / ATCC BAA-453</strain>
    </source>
</reference>
<sequence length="238" mass="26443">MAFTFKQFHIDDLNCGMAVSTDAVVLGAWAPLTNAKQILDIGAGSGILGLMAAQRSQANITCIELDNTAAIACQHNIAQSPWASRIRLVQGSIQQLSQAEEYQGYFDHIICNPPYFEHGPQAQLSQRAMARHTDQLSFNELLAAIEQCLSPNGLASLILPIQSLHNFNHLLSQSRLEWVERVDIKSVEGKRANRVLCLLTTQTHRTVEPKVSELTLRDTSGQYSQAMVHLTQDFYLKL</sequence>
<feature type="chain" id="PRO_0000387426" description="tRNA1(Val) (adenine(37)-N6)-methyltransferase">
    <location>
        <begin position="1"/>
        <end position="238"/>
    </location>
</feature>
<dbReference type="EC" id="2.1.1.223" evidence="1"/>
<dbReference type="EMBL" id="CP000681">
    <property type="protein sequence ID" value="ABP74617.1"/>
    <property type="molecule type" value="Genomic_DNA"/>
</dbReference>
<dbReference type="SMR" id="A4Y3T4"/>
<dbReference type="STRING" id="319224.Sputcn32_0888"/>
<dbReference type="KEGG" id="spc:Sputcn32_0888"/>
<dbReference type="eggNOG" id="COG4123">
    <property type="taxonomic scope" value="Bacteria"/>
</dbReference>
<dbReference type="HOGENOM" id="CLU_061983_0_0_6"/>
<dbReference type="GO" id="GO:0005737">
    <property type="term" value="C:cytoplasm"/>
    <property type="evidence" value="ECO:0007669"/>
    <property type="project" value="UniProtKB-SubCell"/>
</dbReference>
<dbReference type="GO" id="GO:0003676">
    <property type="term" value="F:nucleic acid binding"/>
    <property type="evidence" value="ECO:0007669"/>
    <property type="project" value="InterPro"/>
</dbReference>
<dbReference type="GO" id="GO:0016430">
    <property type="term" value="F:tRNA (adenine-N6)-methyltransferase activity"/>
    <property type="evidence" value="ECO:0007669"/>
    <property type="project" value="UniProtKB-UniRule"/>
</dbReference>
<dbReference type="GO" id="GO:0032259">
    <property type="term" value="P:methylation"/>
    <property type="evidence" value="ECO:0007669"/>
    <property type="project" value="UniProtKB-KW"/>
</dbReference>
<dbReference type="GO" id="GO:0008033">
    <property type="term" value="P:tRNA processing"/>
    <property type="evidence" value="ECO:0007669"/>
    <property type="project" value="UniProtKB-UniRule"/>
</dbReference>
<dbReference type="CDD" id="cd02440">
    <property type="entry name" value="AdoMet_MTases"/>
    <property type="match status" value="1"/>
</dbReference>
<dbReference type="Gene3D" id="3.40.50.150">
    <property type="entry name" value="Vaccinia Virus protein VP39"/>
    <property type="match status" value="1"/>
</dbReference>
<dbReference type="HAMAP" id="MF_01872">
    <property type="entry name" value="tRNA_methyltr_YfiC"/>
    <property type="match status" value="1"/>
</dbReference>
<dbReference type="InterPro" id="IPR002052">
    <property type="entry name" value="DNA_methylase_N6_adenine_CS"/>
</dbReference>
<dbReference type="InterPro" id="IPR029063">
    <property type="entry name" value="SAM-dependent_MTases_sf"/>
</dbReference>
<dbReference type="InterPro" id="IPR007848">
    <property type="entry name" value="Small_mtfrase_dom"/>
</dbReference>
<dbReference type="InterPro" id="IPR050210">
    <property type="entry name" value="tRNA_Adenine-N(6)_MTase"/>
</dbReference>
<dbReference type="InterPro" id="IPR022882">
    <property type="entry name" value="tRNA_adenine-N6_MeTrfase"/>
</dbReference>
<dbReference type="PANTHER" id="PTHR47739">
    <property type="entry name" value="TRNA1(VAL) (ADENINE(37)-N6)-METHYLTRANSFERASE"/>
    <property type="match status" value="1"/>
</dbReference>
<dbReference type="PANTHER" id="PTHR47739:SF1">
    <property type="entry name" value="TRNA1(VAL) (ADENINE(37)-N6)-METHYLTRANSFERASE"/>
    <property type="match status" value="1"/>
</dbReference>
<dbReference type="Pfam" id="PF05175">
    <property type="entry name" value="MTS"/>
    <property type="match status" value="1"/>
</dbReference>
<dbReference type="SUPFAM" id="SSF53335">
    <property type="entry name" value="S-adenosyl-L-methionine-dependent methyltransferases"/>
    <property type="match status" value="1"/>
</dbReference>
<dbReference type="PROSITE" id="PS00092">
    <property type="entry name" value="N6_MTASE"/>
    <property type="match status" value="1"/>
</dbReference>
<keyword id="KW-0963">Cytoplasm</keyword>
<keyword id="KW-0489">Methyltransferase</keyword>
<keyword id="KW-0949">S-adenosyl-L-methionine</keyword>
<keyword id="KW-0808">Transferase</keyword>
<keyword id="KW-0819">tRNA processing</keyword>